<keyword id="KW-0007">Acetylation</keyword>
<keyword id="KW-0963">Cytoplasm</keyword>
<keyword id="KW-1017">Isopeptide bond</keyword>
<keyword id="KW-0539">Nucleus</keyword>
<keyword id="KW-0597">Phosphoprotein</keyword>
<keyword id="KW-1185">Reference proteome</keyword>
<keyword id="KW-0687">Ribonucleoprotein</keyword>
<keyword id="KW-0689">Ribosomal protein</keyword>
<keyword id="KW-0832">Ubl conjugation</keyword>
<organism>
    <name type="scientific">Pongo abelii</name>
    <name type="common">Sumatran orangutan</name>
    <name type="synonym">Pongo pygmaeus abelii</name>
    <dbReference type="NCBI Taxonomy" id="9601"/>
    <lineage>
        <taxon>Eukaryota</taxon>
        <taxon>Metazoa</taxon>
        <taxon>Chordata</taxon>
        <taxon>Craniata</taxon>
        <taxon>Vertebrata</taxon>
        <taxon>Euteleostomi</taxon>
        <taxon>Mammalia</taxon>
        <taxon>Eutheria</taxon>
        <taxon>Euarchontoglires</taxon>
        <taxon>Primates</taxon>
        <taxon>Haplorrhini</taxon>
        <taxon>Catarrhini</taxon>
        <taxon>Hominidae</taxon>
        <taxon>Pongo</taxon>
    </lineage>
</organism>
<gene>
    <name type="primary">RPS24</name>
</gene>
<reference key="1">
    <citation type="submission" date="2004-11" db="EMBL/GenBank/DDBJ databases">
        <authorList>
            <consortium name="The German cDNA consortium"/>
        </authorList>
    </citation>
    <scope>NUCLEOTIDE SEQUENCE [LARGE SCALE MRNA]</scope>
    <source>
        <tissue>Heart</tissue>
    </source>
</reference>
<name>RS24_PONAB</name>
<sequence>MNDTVTIRTRKFMTNRLLQRKQMVIDVLHPGKATVPKTEIREKLAKMYKTTPDVIFVFGFRTHFGGGKTTGFGMIYDSLDYAKKNEPKHRLARHGLYEKKKTSRKQRKERKNRMKKVRGTAKANVGAGKKK</sequence>
<protein>
    <recommendedName>
        <fullName evidence="3">Small ribosomal subunit protein eS24</fullName>
    </recommendedName>
    <alternativeName>
        <fullName>40S ribosomal protein S24</fullName>
    </alternativeName>
</protein>
<feature type="chain" id="PRO_0000231012" description="Small ribosomal subunit protein eS24">
    <location>
        <begin position="1"/>
        <end position="131"/>
    </location>
</feature>
<feature type="region of interest" description="Disordered" evidence="2">
    <location>
        <begin position="90"/>
        <end position="131"/>
    </location>
</feature>
<feature type="compositionally biased region" description="Basic and acidic residues" evidence="2">
    <location>
        <begin position="90"/>
        <end position="100"/>
    </location>
</feature>
<feature type="compositionally biased region" description="Basic residues" evidence="2">
    <location>
        <begin position="101"/>
        <end position="119"/>
    </location>
</feature>
<feature type="modified residue" description="N-acetylmethionine" evidence="1">
    <location>
        <position position="1"/>
    </location>
</feature>
<feature type="modified residue" description="Phosphothreonine" evidence="1">
    <location>
        <position position="9"/>
    </location>
</feature>
<feature type="cross-link" description="Glycyl lysine isopeptide (Lys-Gly) (interchain with G-Cter in SUMO2)" evidence="1">
    <location>
        <position position="37"/>
    </location>
</feature>
<proteinExistence type="evidence at transcript level"/>
<evidence type="ECO:0000250" key="1">
    <source>
        <dbReference type="UniProtKB" id="P62847"/>
    </source>
</evidence>
<evidence type="ECO:0000256" key="2">
    <source>
        <dbReference type="SAM" id="MobiDB-lite"/>
    </source>
</evidence>
<evidence type="ECO:0000305" key="3"/>
<comment type="function">
    <text evidence="1">Component of the small ribosomal subunit. The ribosome is a large ribonucleoprotein complex responsible for the synthesis of proteins in the cell. Required for processing of pre-rRNA and maturation of 40S ribosomal subunits. Part of the small subunit (SSU) processome, first precursor of the small eukaryotic ribosomal subunit. During the assembly of the SSU processome in the nucleolus, many ribosome biogenesis factors, an RNA chaperone and ribosomal proteins associate with the nascent pre-rRNA and work in concert to generate RNA folding, modifications, rearrangements and cleavage as well as targeted degradation of pre-ribosomal RNA by the RNA exosome.</text>
</comment>
<comment type="subunit">
    <text evidence="1">Component of the small ribosomal subunit. Part of the small subunit (SSU) processome, composed of more than 70 proteins and the RNA chaperone small nucleolar RNA (snoRNA) U3.</text>
</comment>
<comment type="subcellular location">
    <subcellularLocation>
        <location evidence="1">Cytoplasm</location>
    </subcellularLocation>
    <subcellularLocation>
        <location evidence="1">Nucleus</location>
        <location evidence="1">Nucleolus</location>
    </subcellularLocation>
</comment>
<comment type="similarity">
    <text evidence="3">Belongs to the eukaryotic ribosomal protein eS24 family.</text>
</comment>
<accession>Q5RAQ8</accession>
<dbReference type="EMBL" id="CR858954">
    <property type="protein sequence ID" value="CAH91152.1"/>
    <property type="molecule type" value="mRNA"/>
</dbReference>
<dbReference type="RefSeq" id="NP_001125673.1">
    <property type="nucleotide sequence ID" value="NM_001132201.2"/>
</dbReference>
<dbReference type="RefSeq" id="XP_063583170.1">
    <property type="nucleotide sequence ID" value="XM_063727100.1"/>
</dbReference>
<dbReference type="SMR" id="Q5RAQ8"/>
<dbReference type="STRING" id="9601.ENSPPYP00000002679"/>
<dbReference type="Ensembl" id="ENSPPYT00000002769.3">
    <property type="protein sequence ID" value="ENSPPYP00000002679.3"/>
    <property type="gene ID" value="ENSPPYG00000002304.3"/>
</dbReference>
<dbReference type="Ensembl" id="ENSPPYT00000060281.1">
    <property type="protein sequence ID" value="ENSPPYP00000035111.1"/>
    <property type="gene ID" value="ENSPPYG00000002304.3"/>
</dbReference>
<dbReference type="GeneID" id="100172593"/>
<dbReference type="KEGG" id="pon:100172593"/>
<dbReference type="CTD" id="6229"/>
<dbReference type="eggNOG" id="KOG3424">
    <property type="taxonomic scope" value="Eukaryota"/>
</dbReference>
<dbReference type="GeneTree" id="ENSGT00390000000153"/>
<dbReference type="HOGENOM" id="CLU_107248_1_0_1"/>
<dbReference type="InParanoid" id="Q5RAQ8"/>
<dbReference type="OrthoDB" id="9532209at2759"/>
<dbReference type="Proteomes" id="UP000001595">
    <property type="component" value="Chromosome 10"/>
</dbReference>
<dbReference type="GO" id="GO:0005737">
    <property type="term" value="C:cytoplasm"/>
    <property type="evidence" value="ECO:0007669"/>
    <property type="project" value="UniProtKB-SubCell"/>
</dbReference>
<dbReference type="GO" id="GO:0005730">
    <property type="term" value="C:nucleolus"/>
    <property type="evidence" value="ECO:0007669"/>
    <property type="project" value="UniProtKB-SubCell"/>
</dbReference>
<dbReference type="GO" id="GO:0044391">
    <property type="term" value="C:ribosomal subunit"/>
    <property type="evidence" value="ECO:0007669"/>
    <property type="project" value="UniProtKB-ARBA"/>
</dbReference>
<dbReference type="GO" id="GO:0032040">
    <property type="term" value="C:small-subunit processome"/>
    <property type="evidence" value="ECO:0000250"/>
    <property type="project" value="UniProtKB"/>
</dbReference>
<dbReference type="GO" id="GO:0003735">
    <property type="term" value="F:structural constituent of ribosome"/>
    <property type="evidence" value="ECO:0007669"/>
    <property type="project" value="InterPro"/>
</dbReference>
<dbReference type="GO" id="GO:0042274">
    <property type="term" value="P:ribosomal small subunit biogenesis"/>
    <property type="evidence" value="ECO:0000250"/>
    <property type="project" value="UniProtKB"/>
</dbReference>
<dbReference type="GO" id="GO:0006412">
    <property type="term" value="P:translation"/>
    <property type="evidence" value="ECO:0007669"/>
    <property type="project" value="InterPro"/>
</dbReference>
<dbReference type="FunFam" id="3.30.70.3370:FF:000001">
    <property type="entry name" value="40S ribosomal protein S24"/>
    <property type="match status" value="1"/>
</dbReference>
<dbReference type="Gene3D" id="3.30.70.3370">
    <property type="match status" value="1"/>
</dbReference>
<dbReference type="HAMAP" id="MF_00545">
    <property type="entry name" value="Ribosomal_eS24"/>
    <property type="match status" value="1"/>
</dbReference>
<dbReference type="InterPro" id="IPR053709">
    <property type="entry name" value="eRP_eS24_sf"/>
</dbReference>
<dbReference type="InterPro" id="IPR001976">
    <property type="entry name" value="Ribosomal_eS24"/>
</dbReference>
<dbReference type="InterPro" id="IPR018098">
    <property type="entry name" value="Ribosomal_eS24_CS"/>
</dbReference>
<dbReference type="InterPro" id="IPR012678">
    <property type="entry name" value="Ribosomal_uL23/eL15/eS24_sf"/>
</dbReference>
<dbReference type="PANTHER" id="PTHR10496">
    <property type="entry name" value="40S RIBOSOMAL PROTEIN S24"/>
    <property type="match status" value="1"/>
</dbReference>
<dbReference type="Pfam" id="PF01282">
    <property type="entry name" value="Ribosomal_S24e"/>
    <property type="match status" value="1"/>
</dbReference>
<dbReference type="SUPFAM" id="SSF54189">
    <property type="entry name" value="Ribosomal proteins S24e, L23 and L15e"/>
    <property type="match status" value="1"/>
</dbReference>
<dbReference type="PROSITE" id="PS00529">
    <property type="entry name" value="RIBOSOMAL_S24E"/>
    <property type="match status" value="1"/>
</dbReference>